<accession>A6TRW8</accession>
<gene>
    <name evidence="1" type="primary">def</name>
    <name type="ordered locus">Amet_2786</name>
</gene>
<sequence length="147" mass="16202">MAIRLIRTDDDPVLRKKSRVVDKIDSRIHTLLDDMIETMYEADGVGLAAPQVGILKQVIVIDVGEGVIELINPEIIKETGSQCDVEGCLSLPGHSGEVERPAIVKVRGLNRQGKMVEIQGTELLARALCHEIDHLNGILFTDKIIKE</sequence>
<comment type="function">
    <text evidence="1">Removes the formyl group from the N-terminal Met of newly synthesized proteins. Requires at least a dipeptide for an efficient rate of reaction. N-terminal L-methionine is a prerequisite for activity but the enzyme has broad specificity at other positions.</text>
</comment>
<comment type="catalytic activity">
    <reaction evidence="1">
        <text>N-terminal N-formyl-L-methionyl-[peptide] + H2O = N-terminal L-methionyl-[peptide] + formate</text>
        <dbReference type="Rhea" id="RHEA:24420"/>
        <dbReference type="Rhea" id="RHEA-COMP:10639"/>
        <dbReference type="Rhea" id="RHEA-COMP:10640"/>
        <dbReference type="ChEBI" id="CHEBI:15377"/>
        <dbReference type="ChEBI" id="CHEBI:15740"/>
        <dbReference type="ChEBI" id="CHEBI:49298"/>
        <dbReference type="ChEBI" id="CHEBI:64731"/>
        <dbReference type="EC" id="3.5.1.88"/>
    </reaction>
</comment>
<comment type="cofactor">
    <cofactor evidence="1">
        <name>Fe(2+)</name>
        <dbReference type="ChEBI" id="CHEBI:29033"/>
    </cofactor>
    <text evidence="1">Binds 1 Fe(2+) ion.</text>
</comment>
<comment type="similarity">
    <text evidence="1">Belongs to the polypeptide deformylase family.</text>
</comment>
<proteinExistence type="inferred from homology"/>
<reference key="1">
    <citation type="journal article" date="2016" name="Genome Announc.">
        <title>Complete genome sequence of Alkaliphilus metalliredigens strain QYMF, an alkaliphilic and metal-reducing bacterium isolated from borax-contaminated leachate ponds.</title>
        <authorList>
            <person name="Hwang C."/>
            <person name="Copeland A."/>
            <person name="Lucas S."/>
            <person name="Lapidus A."/>
            <person name="Barry K."/>
            <person name="Detter J.C."/>
            <person name="Glavina Del Rio T."/>
            <person name="Hammon N."/>
            <person name="Israni S."/>
            <person name="Dalin E."/>
            <person name="Tice H."/>
            <person name="Pitluck S."/>
            <person name="Chertkov O."/>
            <person name="Brettin T."/>
            <person name="Bruce D."/>
            <person name="Han C."/>
            <person name="Schmutz J."/>
            <person name="Larimer F."/>
            <person name="Land M.L."/>
            <person name="Hauser L."/>
            <person name="Kyrpides N."/>
            <person name="Mikhailova N."/>
            <person name="Ye Q."/>
            <person name="Zhou J."/>
            <person name="Richardson P."/>
            <person name="Fields M.W."/>
        </authorList>
    </citation>
    <scope>NUCLEOTIDE SEQUENCE [LARGE SCALE GENOMIC DNA]</scope>
    <source>
        <strain>QYMF</strain>
    </source>
</reference>
<keyword id="KW-0378">Hydrolase</keyword>
<keyword id="KW-0408">Iron</keyword>
<keyword id="KW-0479">Metal-binding</keyword>
<keyword id="KW-0648">Protein biosynthesis</keyword>
<keyword id="KW-1185">Reference proteome</keyword>
<protein>
    <recommendedName>
        <fullName evidence="1">Peptide deformylase</fullName>
        <shortName evidence="1">PDF</shortName>
        <ecNumber evidence="1">3.5.1.88</ecNumber>
    </recommendedName>
    <alternativeName>
        <fullName evidence="1">Polypeptide deformylase</fullName>
    </alternativeName>
</protein>
<evidence type="ECO:0000255" key="1">
    <source>
        <dbReference type="HAMAP-Rule" id="MF_00163"/>
    </source>
</evidence>
<feature type="chain" id="PRO_1000058241" description="Peptide deformylase">
    <location>
        <begin position="1"/>
        <end position="147"/>
    </location>
</feature>
<feature type="active site" evidence="1">
    <location>
        <position position="131"/>
    </location>
</feature>
<feature type="binding site" evidence="1">
    <location>
        <position position="88"/>
    </location>
    <ligand>
        <name>Fe cation</name>
        <dbReference type="ChEBI" id="CHEBI:24875"/>
    </ligand>
</feature>
<feature type="binding site" evidence="1">
    <location>
        <position position="130"/>
    </location>
    <ligand>
        <name>Fe cation</name>
        <dbReference type="ChEBI" id="CHEBI:24875"/>
    </ligand>
</feature>
<feature type="binding site" evidence="1">
    <location>
        <position position="134"/>
    </location>
    <ligand>
        <name>Fe cation</name>
        <dbReference type="ChEBI" id="CHEBI:24875"/>
    </ligand>
</feature>
<organism>
    <name type="scientific">Alkaliphilus metalliredigens (strain QYMF)</name>
    <dbReference type="NCBI Taxonomy" id="293826"/>
    <lineage>
        <taxon>Bacteria</taxon>
        <taxon>Bacillati</taxon>
        <taxon>Bacillota</taxon>
        <taxon>Clostridia</taxon>
        <taxon>Peptostreptococcales</taxon>
        <taxon>Natronincolaceae</taxon>
        <taxon>Alkaliphilus</taxon>
    </lineage>
</organism>
<name>DEF_ALKMQ</name>
<dbReference type="EC" id="3.5.1.88" evidence="1"/>
<dbReference type="EMBL" id="CP000724">
    <property type="protein sequence ID" value="ABR48936.1"/>
    <property type="molecule type" value="Genomic_DNA"/>
</dbReference>
<dbReference type="RefSeq" id="WP_012063907.1">
    <property type="nucleotide sequence ID" value="NC_009633.1"/>
</dbReference>
<dbReference type="SMR" id="A6TRW8"/>
<dbReference type="STRING" id="293826.Amet_2786"/>
<dbReference type="KEGG" id="amt:Amet_2786"/>
<dbReference type="eggNOG" id="COG0242">
    <property type="taxonomic scope" value="Bacteria"/>
</dbReference>
<dbReference type="HOGENOM" id="CLU_061901_4_2_9"/>
<dbReference type="OrthoDB" id="9784988at2"/>
<dbReference type="Proteomes" id="UP000001572">
    <property type="component" value="Chromosome"/>
</dbReference>
<dbReference type="GO" id="GO:0046872">
    <property type="term" value="F:metal ion binding"/>
    <property type="evidence" value="ECO:0007669"/>
    <property type="project" value="UniProtKB-KW"/>
</dbReference>
<dbReference type="GO" id="GO:0042586">
    <property type="term" value="F:peptide deformylase activity"/>
    <property type="evidence" value="ECO:0007669"/>
    <property type="project" value="UniProtKB-UniRule"/>
</dbReference>
<dbReference type="GO" id="GO:0043686">
    <property type="term" value="P:co-translational protein modification"/>
    <property type="evidence" value="ECO:0007669"/>
    <property type="project" value="TreeGrafter"/>
</dbReference>
<dbReference type="GO" id="GO:0006412">
    <property type="term" value="P:translation"/>
    <property type="evidence" value="ECO:0007669"/>
    <property type="project" value="UniProtKB-UniRule"/>
</dbReference>
<dbReference type="CDD" id="cd00487">
    <property type="entry name" value="Pep_deformylase"/>
    <property type="match status" value="1"/>
</dbReference>
<dbReference type="Gene3D" id="3.90.45.10">
    <property type="entry name" value="Peptide deformylase"/>
    <property type="match status" value="1"/>
</dbReference>
<dbReference type="HAMAP" id="MF_00163">
    <property type="entry name" value="Pep_deformylase"/>
    <property type="match status" value="1"/>
</dbReference>
<dbReference type="InterPro" id="IPR023635">
    <property type="entry name" value="Peptide_deformylase"/>
</dbReference>
<dbReference type="InterPro" id="IPR036821">
    <property type="entry name" value="Peptide_deformylase_sf"/>
</dbReference>
<dbReference type="NCBIfam" id="TIGR00079">
    <property type="entry name" value="pept_deformyl"/>
    <property type="match status" value="1"/>
</dbReference>
<dbReference type="NCBIfam" id="NF001159">
    <property type="entry name" value="PRK00150.1-3"/>
    <property type="match status" value="1"/>
</dbReference>
<dbReference type="PANTHER" id="PTHR10458">
    <property type="entry name" value="PEPTIDE DEFORMYLASE"/>
    <property type="match status" value="1"/>
</dbReference>
<dbReference type="PANTHER" id="PTHR10458:SF22">
    <property type="entry name" value="PEPTIDE DEFORMYLASE"/>
    <property type="match status" value="1"/>
</dbReference>
<dbReference type="Pfam" id="PF01327">
    <property type="entry name" value="Pep_deformylase"/>
    <property type="match status" value="1"/>
</dbReference>
<dbReference type="PIRSF" id="PIRSF004749">
    <property type="entry name" value="Pep_def"/>
    <property type="match status" value="1"/>
</dbReference>
<dbReference type="PRINTS" id="PR01576">
    <property type="entry name" value="PDEFORMYLASE"/>
</dbReference>
<dbReference type="SUPFAM" id="SSF56420">
    <property type="entry name" value="Peptide deformylase"/>
    <property type="match status" value="1"/>
</dbReference>